<comment type="function">
    <text evidence="1">Located at the top of the head of the 30S subunit, it contacts several helices of the 16S rRNA. In the 70S ribosome it contacts the 23S rRNA (bridge B1a) and protein L5 of the 50S subunit (bridge B1b), connecting the 2 subunits; these bridges are implicated in subunit movement. Contacts the tRNAs in the A and P-sites.</text>
</comment>
<comment type="subunit">
    <text evidence="1">Part of the 30S ribosomal subunit. Forms a loose heterodimer with protein S19. Forms two bridges to the 50S subunit in the 70S ribosome.</text>
</comment>
<comment type="similarity">
    <text evidence="1">Belongs to the universal ribosomal protein uS13 family.</text>
</comment>
<accession>Q1J8Y9</accession>
<organism>
    <name type="scientific">Streptococcus pyogenes serotype M4 (strain MGAS10750)</name>
    <dbReference type="NCBI Taxonomy" id="370554"/>
    <lineage>
        <taxon>Bacteria</taxon>
        <taxon>Bacillati</taxon>
        <taxon>Bacillota</taxon>
        <taxon>Bacilli</taxon>
        <taxon>Lactobacillales</taxon>
        <taxon>Streptococcaceae</taxon>
        <taxon>Streptococcus</taxon>
    </lineage>
</organism>
<gene>
    <name evidence="1" type="primary">rpsM</name>
    <name type="ordered locus">MGAS10750_Spy0072</name>
</gene>
<proteinExistence type="inferred from homology"/>
<evidence type="ECO:0000255" key="1">
    <source>
        <dbReference type="HAMAP-Rule" id="MF_01315"/>
    </source>
</evidence>
<evidence type="ECO:0000256" key="2">
    <source>
        <dbReference type="SAM" id="MobiDB-lite"/>
    </source>
</evidence>
<evidence type="ECO:0000305" key="3"/>
<sequence>MARIAGVDIPNDKRVVISLTYVYGIGLATSKKILAAAGISEDIRVKDLTSDQEDAIRREVDAIKVEGDLRREVNMNIKRLMEIGSYRGIRHRRGLPVRGQNTKNNARTRKGKAVAIAGKKK</sequence>
<protein>
    <recommendedName>
        <fullName evidence="1">Small ribosomal subunit protein uS13</fullName>
    </recommendedName>
    <alternativeName>
        <fullName evidence="3">30S ribosomal protein S13</fullName>
    </alternativeName>
</protein>
<reference key="1">
    <citation type="journal article" date="2006" name="Proc. Natl. Acad. Sci. U.S.A.">
        <title>Molecular genetic anatomy of inter- and intraserotype variation in the human bacterial pathogen group A Streptococcus.</title>
        <authorList>
            <person name="Beres S.B."/>
            <person name="Richter E.W."/>
            <person name="Nagiec M.J."/>
            <person name="Sumby P."/>
            <person name="Porcella S.F."/>
            <person name="DeLeo F.R."/>
            <person name="Musser J.M."/>
        </authorList>
    </citation>
    <scope>NUCLEOTIDE SEQUENCE [LARGE SCALE GENOMIC DNA]</scope>
    <source>
        <strain>MGAS10750</strain>
    </source>
</reference>
<feature type="chain" id="PRO_0000306721" description="Small ribosomal subunit protein uS13">
    <location>
        <begin position="1"/>
        <end position="121"/>
    </location>
</feature>
<feature type="region of interest" description="Disordered" evidence="2">
    <location>
        <begin position="96"/>
        <end position="121"/>
    </location>
</feature>
<feature type="compositionally biased region" description="Basic residues" evidence="2">
    <location>
        <begin position="106"/>
        <end position="121"/>
    </location>
</feature>
<keyword id="KW-0687">Ribonucleoprotein</keyword>
<keyword id="KW-0689">Ribosomal protein</keyword>
<keyword id="KW-0694">RNA-binding</keyword>
<keyword id="KW-0699">rRNA-binding</keyword>
<keyword id="KW-0820">tRNA-binding</keyword>
<dbReference type="EMBL" id="CP000262">
    <property type="protein sequence ID" value="ABF37022.1"/>
    <property type="molecule type" value="Genomic_DNA"/>
</dbReference>
<dbReference type="SMR" id="Q1J8Y9"/>
<dbReference type="KEGG" id="spi:MGAS10750_Spy0072"/>
<dbReference type="HOGENOM" id="CLU_103849_1_1_9"/>
<dbReference type="Proteomes" id="UP000002434">
    <property type="component" value="Chromosome"/>
</dbReference>
<dbReference type="GO" id="GO:0005829">
    <property type="term" value="C:cytosol"/>
    <property type="evidence" value="ECO:0007669"/>
    <property type="project" value="TreeGrafter"/>
</dbReference>
<dbReference type="GO" id="GO:0015935">
    <property type="term" value="C:small ribosomal subunit"/>
    <property type="evidence" value="ECO:0007669"/>
    <property type="project" value="TreeGrafter"/>
</dbReference>
<dbReference type="GO" id="GO:0019843">
    <property type="term" value="F:rRNA binding"/>
    <property type="evidence" value="ECO:0007669"/>
    <property type="project" value="UniProtKB-UniRule"/>
</dbReference>
<dbReference type="GO" id="GO:0003735">
    <property type="term" value="F:structural constituent of ribosome"/>
    <property type="evidence" value="ECO:0007669"/>
    <property type="project" value="InterPro"/>
</dbReference>
<dbReference type="GO" id="GO:0000049">
    <property type="term" value="F:tRNA binding"/>
    <property type="evidence" value="ECO:0007669"/>
    <property type="project" value="UniProtKB-UniRule"/>
</dbReference>
<dbReference type="GO" id="GO:0006412">
    <property type="term" value="P:translation"/>
    <property type="evidence" value="ECO:0007669"/>
    <property type="project" value="UniProtKB-UniRule"/>
</dbReference>
<dbReference type="FunFam" id="1.10.8.50:FF:000001">
    <property type="entry name" value="30S ribosomal protein S13"/>
    <property type="match status" value="1"/>
</dbReference>
<dbReference type="FunFam" id="4.10.910.10:FF:000001">
    <property type="entry name" value="30S ribosomal protein S13"/>
    <property type="match status" value="1"/>
</dbReference>
<dbReference type="Gene3D" id="1.10.8.50">
    <property type="match status" value="1"/>
</dbReference>
<dbReference type="Gene3D" id="4.10.910.10">
    <property type="entry name" value="30s ribosomal protein s13, domain 2"/>
    <property type="match status" value="1"/>
</dbReference>
<dbReference type="HAMAP" id="MF_01315">
    <property type="entry name" value="Ribosomal_uS13"/>
    <property type="match status" value="1"/>
</dbReference>
<dbReference type="InterPro" id="IPR027437">
    <property type="entry name" value="Rbsml_uS13_C"/>
</dbReference>
<dbReference type="InterPro" id="IPR001892">
    <property type="entry name" value="Ribosomal_uS13"/>
</dbReference>
<dbReference type="InterPro" id="IPR010979">
    <property type="entry name" value="Ribosomal_uS13-like_H2TH"/>
</dbReference>
<dbReference type="InterPro" id="IPR019980">
    <property type="entry name" value="Ribosomal_uS13_bac-type"/>
</dbReference>
<dbReference type="InterPro" id="IPR018269">
    <property type="entry name" value="Ribosomal_uS13_CS"/>
</dbReference>
<dbReference type="NCBIfam" id="TIGR03631">
    <property type="entry name" value="uS13_bact"/>
    <property type="match status" value="1"/>
</dbReference>
<dbReference type="PANTHER" id="PTHR10871">
    <property type="entry name" value="30S RIBOSOMAL PROTEIN S13/40S RIBOSOMAL PROTEIN S18"/>
    <property type="match status" value="1"/>
</dbReference>
<dbReference type="PANTHER" id="PTHR10871:SF1">
    <property type="entry name" value="SMALL RIBOSOMAL SUBUNIT PROTEIN US13M"/>
    <property type="match status" value="1"/>
</dbReference>
<dbReference type="Pfam" id="PF00416">
    <property type="entry name" value="Ribosomal_S13"/>
    <property type="match status" value="1"/>
</dbReference>
<dbReference type="PIRSF" id="PIRSF002134">
    <property type="entry name" value="Ribosomal_S13"/>
    <property type="match status" value="1"/>
</dbReference>
<dbReference type="SUPFAM" id="SSF46946">
    <property type="entry name" value="S13-like H2TH domain"/>
    <property type="match status" value="1"/>
</dbReference>
<dbReference type="PROSITE" id="PS00646">
    <property type="entry name" value="RIBOSOMAL_S13_1"/>
    <property type="match status" value="1"/>
</dbReference>
<dbReference type="PROSITE" id="PS50159">
    <property type="entry name" value="RIBOSOMAL_S13_2"/>
    <property type="match status" value="1"/>
</dbReference>
<name>RS13_STRPF</name>